<protein>
    <recommendedName>
        <fullName evidence="2">Dyslexia-associated protein KIAA0319-like protein</fullName>
    </recommendedName>
    <alternativeName>
        <fullName evidence="2">Adeno-associated virus receptor</fullName>
        <shortName evidence="2">AAVR</shortName>
    </alternativeName>
</protein>
<comment type="function">
    <text evidence="2">Possible role in axon guidance through interaction with RTN4R.</text>
</comment>
<comment type="subunit">
    <text evidence="2">Interacts with RTN4R.</text>
</comment>
<comment type="subcellular location">
    <subcellularLocation>
        <location evidence="2">Cytoplasmic granule membrane</location>
        <topology evidence="2">Multi-pass membrane protein</topology>
    </subcellularLocation>
    <subcellularLocation>
        <location evidence="2">Golgi apparatus membrane</location>
        <topology>Multi-pass membrane protein</topology>
    </subcellularLocation>
    <subcellularLocation>
        <location evidence="2">Golgi apparatus</location>
        <location evidence="2">trans-Golgi network membrane</location>
        <topology evidence="2">Multi-pass membrane protein</topology>
    </subcellularLocation>
    <subcellularLocation>
        <location evidence="2">Cell membrane</location>
        <topology evidence="2">Multi-pass membrane protein</topology>
    </subcellularLocation>
    <text evidence="2">Traffics from the plasma membrane to the trans-Golgi network.</text>
</comment>
<comment type="alternative products">
    <event type="alternative splicing"/>
    <isoform>
        <id>Q5RFR6-1</id>
        <name>1</name>
        <sequence type="displayed"/>
    </isoform>
    <isoform>
        <id>Q5RFR6-2</id>
        <name>2</name>
        <sequence type="described" ref="VSP_032957"/>
    </isoform>
</comment>
<comment type="PTM">
    <text evidence="1">N-glycosylated.</text>
</comment>
<reference key="1">
    <citation type="submission" date="2004-11" db="EMBL/GenBank/DDBJ databases">
        <authorList>
            <consortium name="The German cDNA consortium"/>
        </authorList>
    </citation>
    <scope>NUCLEOTIDE SEQUENCE [LARGE SCALE MRNA] (ISOFORMS 1 AND 2)</scope>
    <source>
        <tissue>Brain cortex</tissue>
        <tissue>Kidney</tissue>
    </source>
</reference>
<gene>
    <name evidence="2" type="primary">Kiaa0319l</name>
    <name evidence="2" type="synonym">AAVR</name>
</gene>
<proteinExistence type="evidence at transcript level"/>
<feature type="chain" id="PRO_0000329066" description="Dyslexia-associated protein KIAA0319-like protein">
    <location>
        <begin position="1"/>
        <end position="1049"/>
    </location>
</feature>
<feature type="topological domain" description="Cytoplasmic" evidence="4">
    <location>
        <begin position="1"/>
        <end position="29"/>
    </location>
</feature>
<feature type="transmembrane region" description="Helical" evidence="4">
    <location>
        <begin position="30"/>
        <end position="50"/>
    </location>
</feature>
<feature type="topological domain" description="Extracellular" evidence="4">
    <location>
        <begin position="51"/>
        <end position="932"/>
    </location>
</feature>
<feature type="transmembrane region" description="Helical" evidence="4">
    <location>
        <begin position="933"/>
        <end position="953"/>
    </location>
</feature>
<feature type="topological domain" description="Cytoplasmic" evidence="4">
    <location>
        <begin position="954"/>
        <end position="1049"/>
    </location>
</feature>
<feature type="domain" description="MANSC" evidence="6">
    <location>
        <begin position="49"/>
        <end position="127"/>
    </location>
</feature>
<feature type="domain" description="PKD 1" evidence="5">
    <location>
        <begin position="310"/>
        <end position="401"/>
    </location>
</feature>
<feature type="domain" description="PKD 2" evidence="5">
    <location>
        <begin position="409"/>
        <end position="498"/>
    </location>
</feature>
<feature type="domain" description="PKD 3" evidence="5">
    <location>
        <begin position="504"/>
        <end position="594"/>
    </location>
</feature>
<feature type="domain" description="PKD 4" evidence="5">
    <location>
        <begin position="600"/>
        <end position="688"/>
    </location>
</feature>
<feature type="domain" description="PKD 5" evidence="5">
    <location>
        <begin position="694"/>
        <end position="785"/>
    </location>
</feature>
<feature type="region of interest" description="Disordered" evidence="7">
    <location>
        <begin position="234"/>
        <end position="277"/>
    </location>
</feature>
<feature type="region of interest" description="Disordered" evidence="7">
    <location>
        <begin position="1022"/>
        <end position="1049"/>
    </location>
</feature>
<feature type="compositionally biased region" description="Polar residues" evidence="7">
    <location>
        <begin position="1028"/>
        <end position="1037"/>
    </location>
</feature>
<feature type="modified residue" description="Phosphothreonine" evidence="2">
    <location>
        <position position="974"/>
    </location>
</feature>
<feature type="modified residue" description="Phosphoserine" evidence="2">
    <location>
        <position position="978"/>
    </location>
</feature>
<feature type="modified residue" description="Phosphoserine" evidence="3">
    <location>
        <position position="1009"/>
    </location>
</feature>
<feature type="modified residue" description="Phosphoserine" evidence="2">
    <location>
        <position position="1031"/>
    </location>
</feature>
<feature type="modified residue" description="Phosphothreonine" evidence="2">
    <location>
        <position position="1037"/>
    </location>
</feature>
<feature type="glycosylation site" description="N-linked (GlcNAc...) asparagine" evidence="4">
    <location>
        <position position="247"/>
    </location>
</feature>
<feature type="glycosylation site" description="N-linked (GlcNAc...) asparagine" evidence="4">
    <location>
        <position position="395"/>
    </location>
</feature>
<feature type="glycosylation site" description="N-linked (GlcNAc...) asparagine" evidence="4">
    <location>
        <position position="487"/>
    </location>
</feature>
<feature type="splice variant" id="VSP_032957" description="In isoform 2." evidence="8">
    <location>
        <begin position="1"/>
        <end position="358"/>
    </location>
</feature>
<feature type="sequence conflict" description="In Ref. 1; CAH92415." evidence="9" ref="1">
    <original>T</original>
    <variation>A</variation>
    <location>
        <position position="397"/>
    </location>
</feature>
<feature type="sequence conflict" description="In Ref. 1; CAH92415." evidence="9" ref="1">
    <original>V</original>
    <variation>A</variation>
    <location>
        <position position="995"/>
    </location>
</feature>
<keyword id="KW-0025">Alternative splicing</keyword>
<keyword id="KW-1003">Cell membrane</keyword>
<keyword id="KW-0325">Glycoprotein</keyword>
<keyword id="KW-0333">Golgi apparatus</keyword>
<keyword id="KW-0472">Membrane</keyword>
<keyword id="KW-0597">Phosphoprotein</keyword>
<keyword id="KW-1185">Reference proteome</keyword>
<keyword id="KW-0677">Repeat</keyword>
<keyword id="KW-0812">Transmembrane</keyword>
<keyword id="KW-1133">Transmembrane helix</keyword>
<dbReference type="EMBL" id="CR857086">
    <property type="protein sequence ID" value="CAH89391.1"/>
    <property type="molecule type" value="mRNA"/>
</dbReference>
<dbReference type="EMBL" id="CR860273">
    <property type="protein sequence ID" value="CAH92415.1"/>
    <property type="molecule type" value="mRNA"/>
</dbReference>
<dbReference type="RefSeq" id="NP_001124549.1">
    <molecule id="Q5RFR6-1"/>
    <property type="nucleotide sequence ID" value="NM_001131077.1"/>
</dbReference>
<dbReference type="RefSeq" id="XP_009250745.1">
    <property type="nucleotide sequence ID" value="XM_009252470.1"/>
</dbReference>
<dbReference type="SMR" id="Q5RFR6"/>
<dbReference type="FunCoup" id="Q5RFR6">
    <property type="interactions" value="1890"/>
</dbReference>
<dbReference type="STRING" id="9601.ENSPPYP00000001797"/>
<dbReference type="GlyCosmos" id="Q5RFR6">
    <property type="glycosylation" value="3 sites, No reported glycans"/>
</dbReference>
<dbReference type="Ensembl" id="ENSPPYT00000001854.3">
    <molecule id="Q5RFR6-1"/>
    <property type="protein sequence ID" value="ENSPPYP00000001797.2"/>
    <property type="gene ID" value="ENSPPYG00000001558.3"/>
</dbReference>
<dbReference type="GeneID" id="100127092"/>
<dbReference type="KEGG" id="pon:100127092"/>
<dbReference type="CTD" id="79932"/>
<dbReference type="eggNOG" id="ENOG502QR8M">
    <property type="taxonomic scope" value="Eukaryota"/>
</dbReference>
<dbReference type="GeneTree" id="ENSGT00940000157613"/>
<dbReference type="HOGENOM" id="CLU_009448_0_0_1"/>
<dbReference type="InParanoid" id="Q5RFR6"/>
<dbReference type="OMA" id="AYVIPDE"/>
<dbReference type="OrthoDB" id="536372at2759"/>
<dbReference type="TreeFam" id="TF323356"/>
<dbReference type="Proteomes" id="UP000001595">
    <property type="component" value="Chromosome 1"/>
</dbReference>
<dbReference type="GO" id="GO:0031410">
    <property type="term" value="C:cytoplasmic vesicle"/>
    <property type="evidence" value="ECO:0000250"/>
    <property type="project" value="UniProtKB"/>
</dbReference>
<dbReference type="GO" id="GO:0000139">
    <property type="term" value="C:Golgi membrane"/>
    <property type="evidence" value="ECO:0007669"/>
    <property type="project" value="UniProtKB-SubCell"/>
</dbReference>
<dbReference type="GO" id="GO:0005730">
    <property type="term" value="C:nucleolus"/>
    <property type="evidence" value="ECO:0007669"/>
    <property type="project" value="Ensembl"/>
</dbReference>
<dbReference type="GO" id="GO:0005886">
    <property type="term" value="C:plasma membrane"/>
    <property type="evidence" value="ECO:0007669"/>
    <property type="project" value="UniProtKB-SubCell"/>
</dbReference>
<dbReference type="GO" id="GO:0005802">
    <property type="term" value="C:trans-Golgi network"/>
    <property type="evidence" value="ECO:0007669"/>
    <property type="project" value="Ensembl"/>
</dbReference>
<dbReference type="GO" id="GO:0030317">
    <property type="term" value="P:flagellated sperm motility"/>
    <property type="evidence" value="ECO:0007669"/>
    <property type="project" value="Ensembl"/>
</dbReference>
<dbReference type="GO" id="GO:0001764">
    <property type="term" value="P:neuron migration"/>
    <property type="evidence" value="ECO:0007669"/>
    <property type="project" value="Ensembl"/>
</dbReference>
<dbReference type="GO" id="GO:0120211">
    <property type="term" value="P:proacrosomal vesicle fusion"/>
    <property type="evidence" value="ECO:0007669"/>
    <property type="project" value="Ensembl"/>
</dbReference>
<dbReference type="GO" id="GO:0019065">
    <property type="term" value="P:receptor-mediated endocytosis of virus by host cell"/>
    <property type="evidence" value="ECO:0007669"/>
    <property type="project" value="Ensembl"/>
</dbReference>
<dbReference type="GO" id="GO:0010996">
    <property type="term" value="P:response to auditory stimulus"/>
    <property type="evidence" value="ECO:0007669"/>
    <property type="project" value="Ensembl"/>
</dbReference>
<dbReference type="CDD" id="cd00146">
    <property type="entry name" value="PKD"/>
    <property type="match status" value="4"/>
</dbReference>
<dbReference type="FunFam" id="2.60.40.10:FF:000061">
    <property type="entry name" value="Dyslexia-associated protein KIAA0319 homolog"/>
    <property type="match status" value="2"/>
</dbReference>
<dbReference type="FunFam" id="2.60.40.10:FF:000258">
    <property type="entry name" value="Dyslexia-associated protein KIAA0319 homolog"/>
    <property type="match status" value="1"/>
</dbReference>
<dbReference type="FunFam" id="2.60.40.10:FF:000319">
    <property type="entry name" value="Dyslexia-associated protein KIAA0319 homolog"/>
    <property type="match status" value="1"/>
</dbReference>
<dbReference type="FunFam" id="2.60.40.10:FF:000257">
    <property type="entry name" value="Dyslexia-associated protein KIAA0319-like"/>
    <property type="match status" value="1"/>
</dbReference>
<dbReference type="Gene3D" id="2.60.40.10">
    <property type="entry name" value="Immunoglobulins"/>
    <property type="match status" value="5"/>
</dbReference>
<dbReference type="InterPro" id="IPR013783">
    <property type="entry name" value="Ig-like_fold"/>
</dbReference>
<dbReference type="InterPro" id="IPR029865">
    <property type="entry name" value="KIAA0319-like"/>
</dbReference>
<dbReference type="InterPro" id="IPR056502">
    <property type="entry name" value="KIAA0319-like_C"/>
</dbReference>
<dbReference type="InterPro" id="IPR013980">
    <property type="entry name" value="MANSC_dom"/>
</dbReference>
<dbReference type="InterPro" id="IPR022409">
    <property type="entry name" value="PKD/Chitinase_dom"/>
</dbReference>
<dbReference type="InterPro" id="IPR000601">
    <property type="entry name" value="PKD_dom"/>
</dbReference>
<dbReference type="InterPro" id="IPR035986">
    <property type="entry name" value="PKD_dom_sf"/>
</dbReference>
<dbReference type="PANTHER" id="PTHR46182:SF3">
    <property type="entry name" value="DYSLEXIA-ASSOCIATED PROTEIN KIAA0319-LIKE PROTEIN"/>
    <property type="match status" value="1"/>
</dbReference>
<dbReference type="PANTHER" id="PTHR46182">
    <property type="entry name" value="FI19480P1"/>
    <property type="match status" value="1"/>
</dbReference>
<dbReference type="Pfam" id="PF22352">
    <property type="entry name" value="K319L-like_PKD"/>
    <property type="match status" value="5"/>
</dbReference>
<dbReference type="Pfam" id="PF23620">
    <property type="entry name" value="KIAA0319"/>
    <property type="match status" value="1"/>
</dbReference>
<dbReference type="Pfam" id="PF23597">
    <property type="entry name" value="KIAA0319_N"/>
    <property type="match status" value="1"/>
</dbReference>
<dbReference type="SMART" id="SM00089">
    <property type="entry name" value="PKD"/>
    <property type="match status" value="5"/>
</dbReference>
<dbReference type="SUPFAM" id="SSF49299">
    <property type="entry name" value="PKD domain"/>
    <property type="match status" value="4"/>
</dbReference>
<dbReference type="PROSITE" id="PS50986">
    <property type="entry name" value="MANSC"/>
    <property type="match status" value="1"/>
</dbReference>
<dbReference type="PROSITE" id="PS50093">
    <property type="entry name" value="PKD"/>
    <property type="match status" value="1"/>
</dbReference>
<organism>
    <name type="scientific">Pongo abelii</name>
    <name type="common">Sumatran orangutan</name>
    <name type="synonym">Pongo pygmaeus abelii</name>
    <dbReference type="NCBI Taxonomy" id="9601"/>
    <lineage>
        <taxon>Eukaryota</taxon>
        <taxon>Metazoa</taxon>
        <taxon>Chordata</taxon>
        <taxon>Craniata</taxon>
        <taxon>Vertebrata</taxon>
        <taxon>Euteleostomi</taxon>
        <taxon>Mammalia</taxon>
        <taxon>Eutheria</taxon>
        <taxon>Euarchontoglires</taxon>
        <taxon>Primates</taxon>
        <taxon>Haplorrhini</taxon>
        <taxon>Catarrhini</taxon>
        <taxon>Hominidae</taxon>
        <taxon>Pongo</taxon>
    </lineage>
</organism>
<name>K319L_PONAB</name>
<evidence type="ECO:0000250" key="1"/>
<evidence type="ECO:0000250" key="2">
    <source>
        <dbReference type="UniProtKB" id="Q8IZA0"/>
    </source>
</evidence>
<evidence type="ECO:0000250" key="3">
    <source>
        <dbReference type="UniProtKB" id="Q8K135"/>
    </source>
</evidence>
<evidence type="ECO:0000255" key="4"/>
<evidence type="ECO:0000255" key="5">
    <source>
        <dbReference type="PROSITE-ProRule" id="PRU00151"/>
    </source>
</evidence>
<evidence type="ECO:0000255" key="6">
    <source>
        <dbReference type="PROSITE-ProRule" id="PRU00341"/>
    </source>
</evidence>
<evidence type="ECO:0000256" key="7">
    <source>
        <dbReference type="SAM" id="MobiDB-lite"/>
    </source>
</evidence>
<evidence type="ECO:0000303" key="8">
    <source ref="1"/>
</evidence>
<evidence type="ECO:0000305" key="9"/>
<sequence>MEKRLGVKPNPASWILSGYYWQTSAKWLRTLYLFYTCFCFSVLWLSTDASESRCQQGKTQFGVGLRSGGENHLWLLEGTPSLQSCWAACCQDSACHVFWWLEGMCIQADCSRPQSCRAFRTHSSNSMLMFLKKFQTADDLGFLPEDDVPHLLGLGWNWASWRQSPPRAALRPAVSSSDQQSLIRKLQKRGSPSEVVTPIVTQHSKVNDSNELGGLTTSGSAEVHKAITISSPLTTDLTAELPGGPKNVSAQPEIPEGLATTPSTQQVKSSEKTQIAVPQPVAPSYSYGTPTPQASFQSTSAPYPVIKELVVSAGDSVQITLPKNEVQLNAYVLQEPPKGETYTYDWQLITHPRDYSGEMEGKHSQILKLSKLTPGLYEFKVIVEGQNAHGEGYVNVTVKPEPRKNRPPIAIVSPQFQEISLPTTSTVIDGSQSTDDDKIVQYHWEELKGPLREEKISEDTAILKLSKLVPGNYTFSLTVVDSDGATNSTTANLTVNKAVDYPPVANAGPNQVITLPQNSITLFGNQSTDDHGITSYEWSLSPSSKGKVVEMQGVRTPTLQLSAMQEGDYTYQLTVTDTIGQQATAQVTVIVQPENNKPPQADAGPDKELTLPVDSTTLDGSKSSDDQKIISYLWEKTQGPDGVQLENANSSIATVTGLQVGTYVFTLTVKDERNLQSQSSVNVIVKEEINKPPIAKITGNVVITLPTSTAELDGSKSSDDKGIVSYLWTRDEGSPAAGEVLNHSDHHPILFLSNLVEGTYTFHLKVTDAKGESDTDRTTVEVKPDPRKNNLVEIILDINVSQLTERLKGMFIRQIGVLLGVLDSDIIVQKIQPYTEQSTKMVFFVQNEPPHQIFKGHEVAAMLKSELRKQKADFLIFRALEINTVTCQLNCSDHGHCDSFTKRCICDPFWMENFIKVQLRDGESNCEWSVLYVIIATFVIVVALGILSWTVICCCKRQKGKPKRKSKYKILDATDQESLELKPTSRTGIKQKGLVLSSSLMHSESELDSDDAIFTWPDREKGKLLHGQNGSVPNGQTPLKARSPREEIL</sequence>
<accession>Q5RFR6</accession>
<accession>Q5R745</accession>